<protein>
    <recommendedName>
        <fullName evidence="1">Large ribosomal subunit protein bL35</fullName>
    </recommendedName>
    <alternativeName>
        <fullName evidence="3">50S ribosomal protein L35</fullName>
    </alternativeName>
</protein>
<feature type="chain" id="PRO_1000146160" description="Large ribosomal subunit protein bL35">
    <location>
        <begin position="1"/>
        <end position="66"/>
    </location>
</feature>
<feature type="region of interest" description="Disordered" evidence="2">
    <location>
        <begin position="1"/>
        <end position="21"/>
    </location>
</feature>
<feature type="compositionally biased region" description="Basic residues" evidence="2">
    <location>
        <begin position="1"/>
        <end position="16"/>
    </location>
</feature>
<dbReference type="EMBL" id="CP000918">
    <property type="protein sequence ID" value="ACO17748.1"/>
    <property type="molecule type" value="Genomic_DNA"/>
</dbReference>
<dbReference type="RefSeq" id="WP_001125943.1">
    <property type="nucleotide sequence ID" value="NC_012468.1"/>
</dbReference>
<dbReference type="SMR" id="C1C6T7"/>
<dbReference type="GeneID" id="93739777"/>
<dbReference type="KEGG" id="snm:SP70585_1000"/>
<dbReference type="HOGENOM" id="CLU_169643_3_0_9"/>
<dbReference type="Proteomes" id="UP000002211">
    <property type="component" value="Chromosome"/>
</dbReference>
<dbReference type="GO" id="GO:0022625">
    <property type="term" value="C:cytosolic large ribosomal subunit"/>
    <property type="evidence" value="ECO:0007669"/>
    <property type="project" value="TreeGrafter"/>
</dbReference>
<dbReference type="GO" id="GO:0003735">
    <property type="term" value="F:structural constituent of ribosome"/>
    <property type="evidence" value="ECO:0007669"/>
    <property type="project" value="InterPro"/>
</dbReference>
<dbReference type="GO" id="GO:0006412">
    <property type="term" value="P:translation"/>
    <property type="evidence" value="ECO:0007669"/>
    <property type="project" value="UniProtKB-UniRule"/>
</dbReference>
<dbReference type="FunFam" id="4.10.410.60:FF:000001">
    <property type="entry name" value="50S ribosomal protein L35"/>
    <property type="match status" value="1"/>
</dbReference>
<dbReference type="Gene3D" id="4.10.410.60">
    <property type="match status" value="1"/>
</dbReference>
<dbReference type="HAMAP" id="MF_00514">
    <property type="entry name" value="Ribosomal_bL35"/>
    <property type="match status" value="1"/>
</dbReference>
<dbReference type="InterPro" id="IPR001706">
    <property type="entry name" value="Ribosomal_bL35"/>
</dbReference>
<dbReference type="InterPro" id="IPR021137">
    <property type="entry name" value="Ribosomal_bL35-like"/>
</dbReference>
<dbReference type="InterPro" id="IPR018265">
    <property type="entry name" value="Ribosomal_bL35_CS"/>
</dbReference>
<dbReference type="InterPro" id="IPR037229">
    <property type="entry name" value="Ribosomal_bL35_sf"/>
</dbReference>
<dbReference type="NCBIfam" id="TIGR00001">
    <property type="entry name" value="rpmI_bact"/>
    <property type="match status" value="1"/>
</dbReference>
<dbReference type="PANTHER" id="PTHR33343">
    <property type="entry name" value="54S RIBOSOMAL PROTEIN BL35M"/>
    <property type="match status" value="1"/>
</dbReference>
<dbReference type="PANTHER" id="PTHR33343:SF1">
    <property type="entry name" value="LARGE RIBOSOMAL SUBUNIT PROTEIN BL35M"/>
    <property type="match status" value="1"/>
</dbReference>
<dbReference type="Pfam" id="PF01632">
    <property type="entry name" value="Ribosomal_L35p"/>
    <property type="match status" value="1"/>
</dbReference>
<dbReference type="PRINTS" id="PR00064">
    <property type="entry name" value="RIBOSOMALL35"/>
</dbReference>
<dbReference type="SUPFAM" id="SSF143034">
    <property type="entry name" value="L35p-like"/>
    <property type="match status" value="1"/>
</dbReference>
<dbReference type="PROSITE" id="PS00936">
    <property type="entry name" value="RIBOSOMAL_L35"/>
    <property type="match status" value="1"/>
</dbReference>
<sequence length="66" mass="7836">MPKQKTHRASAKRFKRTGSGGLKRFRAYTSHRFHGKTKKQRRHLRKASMVHSGDYKRIKAMLTRLK</sequence>
<proteinExistence type="inferred from homology"/>
<evidence type="ECO:0000255" key="1">
    <source>
        <dbReference type="HAMAP-Rule" id="MF_00514"/>
    </source>
</evidence>
<evidence type="ECO:0000256" key="2">
    <source>
        <dbReference type="SAM" id="MobiDB-lite"/>
    </source>
</evidence>
<evidence type="ECO:0000305" key="3"/>
<reference key="1">
    <citation type="journal article" date="2010" name="Genome Biol.">
        <title>Structure and dynamics of the pan-genome of Streptococcus pneumoniae and closely related species.</title>
        <authorList>
            <person name="Donati C."/>
            <person name="Hiller N.L."/>
            <person name="Tettelin H."/>
            <person name="Muzzi A."/>
            <person name="Croucher N.J."/>
            <person name="Angiuoli S.V."/>
            <person name="Oggioni M."/>
            <person name="Dunning Hotopp J.C."/>
            <person name="Hu F.Z."/>
            <person name="Riley D.R."/>
            <person name="Covacci A."/>
            <person name="Mitchell T.J."/>
            <person name="Bentley S.D."/>
            <person name="Kilian M."/>
            <person name="Ehrlich G.D."/>
            <person name="Rappuoli R."/>
            <person name="Moxon E.R."/>
            <person name="Masignani V."/>
        </authorList>
    </citation>
    <scope>NUCLEOTIDE SEQUENCE [LARGE SCALE GENOMIC DNA]</scope>
    <source>
        <strain>70585</strain>
    </source>
</reference>
<keyword id="KW-0687">Ribonucleoprotein</keyword>
<keyword id="KW-0689">Ribosomal protein</keyword>
<organism>
    <name type="scientific">Streptococcus pneumoniae (strain 70585)</name>
    <dbReference type="NCBI Taxonomy" id="488221"/>
    <lineage>
        <taxon>Bacteria</taxon>
        <taxon>Bacillati</taxon>
        <taxon>Bacillota</taxon>
        <taxon>Bacilli</taxon>
        <taxon>Lactobacillales</taxon>
        <taxon>Streptococcaceae</taxon>
        <taxon>Streptococcus</taxon>
    </lineage>
</organism>
<name>RL35_STRP7</name>
<gene>
    <name evidence="1" type="primary">rpmI</name>
    <name type="ordered locus">SP70585_1000</name>
</gene>
<accession>C1C6T7</accession>
<comment type="similarity">
    <text evidence="1">Belongs to the bacterial ribosomal protein bL35 family.</text>
</comment>